<dbReference type="EC" id="2.4.2.9" evidence="1"/>
<dbReference type="EMBL" id="CP001213">
    <property type="protein sequence ID" value="ACL28490.1"/>
    <property type="molecule type" value="Genomic_DNA"/>
</dbReference>
<dbReference type="RefSeq" id="WP_004218505.1">
    <property type="nucleotide sequence ID" value="NC_011835.1"/>
</dbReference>
<dbReference type="SMR" id="B8DVI9"/>
<dbReference type="STRING" id="442563.BLA_0188"/>
<dbReference type="GeneID" id="29695870"/>
<dbReference type="KEGG" id="bla:BLA_0188"/>
<dbReference type="PATRIC" id="fig|442563.4.peg.198"/>
<dbReference type="HOGENOM" id="CLU_067096_2_3_11"/>
<dbReference type="UniPathway" id="UPA00574">
    <property type="reaction ID" value="UER00636"/>
</dbReference>
<dbReference type="Proteomes" id="UP000002456">
    <property type="component" value="Chromosome"/>
</dbReference>
<dbReference type="GO" id="GO:0005525">
    <property type="term" value="F:GTP binding"/>
    <property type="evidence" value="ECO:0007669"/>
    <property type="project" value="UniProtKB-KW"/>
</dbReference>
<dbReference type="GO" id="GO:0000287">
    <property type="term" value="F:magnesium ion binding"/>
    <property type="evidence" value="ECO:0007669"/>
    <property type="project" value="UniProtKB-UniRule"/>
</dbReference>
<dbReference type="GO" id="GO:0004845">
    <property type="term" value="F:uracil phosphoribosyltransferase activity"/>
    <property type="evidence" value="ECO:0007669"/>
    <property type="project" value="UniProtKB-UniRule"/>
</dbReference>
<dbReference type="GO" id="GO:0044206">
    <property type="term" value="P:UMP salvage"/>
    <property type="evidence" value="ECO:0007669"/>
    <property type="project" value="UniProtKB-UniRule"/>
</dbReference>
<dbReference type="GO" id="GO:0006223">
    <property type="term" value="P:uracil salvage"/>
    <property type="evidence" value="ECO:0007669"/>
    <property type="project" value="InterPro"/>
</dbReference>
<dbReference type="CDD" id="cd06223">
    <property type="entry name" value="PRTases_typeI"/>
    <property type="match status" value="1"/>
</dbReference>
<dbReference type="FunFam" id="3.40.50.2020:FF:000003">
    <property type="entry name" value="Uracil phosphoribosyltransferase"/>
    <property type="match status" value="1"/>
</dbReference>
<dbReference type="Gene3D" id="3.40.50.2020">
    <property type="match status" value="1"/>
</dbReference>
<dbReference type="HAMAP" id="MF_01218_B">
    <property type="entry name" value="Upp_B"/>
    <property type="match status" value="1"/>
</dbReference>
<dbReference type="InterPro" id="IPR000836">
    <property type="entry name" value="PRibTrfase_dom"/>
</dbReference>
<dbReference type="InterPro" id="IPR029057">
    <property type="entry name" value="PRTase-like"/>
</dbReference>
<dbReference type="InterPro" id="IPR034332">
    <property type="entry name" value="Upp_B"/>
</dbReference>
<dbReference type="InterPro" id="IPR050054">
    <property type="entry name" value="UPRTase/APRTase"/>
</dbReference>
<dbReference type="InterPro" id="IPR005765">
    <property type="entry name" value="Ura_phspho_trans"/>
</dbReference>
<dbReference type="NCBIfam" id="NF001097">
    <property type="entry name" value="PRK00129.1"/>
    <property type="match status" value="1"/>
</dbReference>
<dbReference type="NCBIfam" id="TIGR01091">
    <property type="entry name" value="upp"/>
    <property type="match status" value="1"/>
</dbReference>
<dbReference type="PANTHER" id="PTHR32315">
    <property type="entry name" value="ADENINE PHOSPHORIBOSYLTRANSFERASE"/>
    <property type="match status" value="1"/>
</dbReference>
<dbReference type="PANTHER" id="PTHR32315:SF4">
    <property type="entry name" value="URACIL PHOSPHORIBOSYLTRANSFERASE, CHLOROPLASTIC"/>
    <property type="match status" value="1"/>
</dbReference>
<dbReference type="Pfam" id="PF14681">
    <property type="entry name" value="UPRTase"/>
    <property type="match status" value="1"/>
</dbReference>
<dbReference type="SUPFAM" id="SSF53271">
    <property type="entry name" value="PRTase-like"/>
    <property type="match status" value="1"/>
</dbReference>
<evidence type="ECO:0000255" key="1">
    <source>
        <dbReference type="HAMAP-Rule" id="MF_01218"/>
    </source>
</evidence>
<protein>
    <recommendedName>
        <fullName evidence="1">Uracil phosphoribosyltransferase</fullName>
        <ecNumber evidence="1">2.4.2.9</ecNumber>
    </recommendedName>
    <alternativeName>
        <fullName evidence="1">UMP pyrophosphorylase</fullName>
    </alternativeName>
    <alternativeName>
        <fullName evidence="1">UPRTase</fullName>
    </alternativeName>
</protein>
<sequence>MELHVLNHPLIEHKLTVLRDKNTPSSTFRELVSELVSLEAYEATRNLEVVDKPIETPVAPMVGKQIAKPRPIIVPVLRAGLGMLDGMTRMMPSAEVGFLGMKRDEEHPTQQITYANRLPDDLSGRQCFLIDPMLATGGTLVTATHYLMDKGAKDVTAICIIAAPEGIKFVEENIREDINFRVVVCGVDEGLNGKSYIVPGLGDAGDRLYGVID</sequence>
<proteinExistence type="inferred from homology"/>
<reference key="1">
    <citation type="journal article" date="2009" name="J. Bacteriol.">
        <title>Genome sequence of the probiotic bacterium Bifidobacterium animalis subsp. lactis AD011.</title>
        <authorList>
            <person name="Kim J.F."/>
            <person name="Jeong H."/>
            <person name="Yu D.S."/>
            <person name="Choi S.-H."/>
            <person name="Hur C.-G."/>
            <person name="Park M.-S."/>
            <person name="Yoon S.H."/>
            <person name="Kim D.-W."/>
            <person name="Ji G.E."/>
            <person name="Park H.-S."/>
            <person name="Oh T.K."/>
        </authorList>
    </citation>
    <scope>NUCLEOTIDE SEQUENCE [LARGE SCALE GENOMIC DNA]</scope>
    <source>
        <strain>AD011</strain>
    </source>
</reference>
<keyword id="KW-0021">Allosteric enzyme</keyword>
<keyword id="KW-0328">Glycosyltransferase</keyword>
<keyword id="KW-0342">GTP-binding</keyword>
<keyword id="KW-0460">Magnesium</keyword>
<keyword id="KW-0547">Nucleotide-binding</keyword>
<keyword id="KW-1185">Reference proteome</keyword>
<keyword id="KW-0808">Transferase</keyword>
<gene>
    <name evidence="1" type="primary">upp</name>
    <name type="ordered locus">BLA_0188</name>
</gene>
<feature type="chain" id="PRO_1000164811" description="Uracil phosphoribosyltransferase">
    <location>
        <begin position="1"/>
        <end position="213"/>
    </location>
</feature>
<feature type="binding site" evidence="1">
    <location>
        <position position="78"/>
    </location>
    <ligand>
        <name>5-phospho-alpha-D-ribose 1-diphosphate</name>
        <dbReference type="ChEBI" id="CHEBI:58017"/>
    </ligand>
</feature>
<feature type="binding site" evidence="1">
    <location>
        <position position="103"/>
    </location>
    <ligand>
        <name>5-phospho-alpha-D-ribose 1-diphosphate</name>
        <dbReference type="ChEBI" id="CHEBI:58017"/>
    </ligand>
</feature>
<feature type="binding site" evidence="1">
    <location>
        <begin position="131"/>
        <end position="139"/>
    </location>
    <ligand>
        <name>5-phospho-alpha-D-ribose 1-diphosphate</name>
        <dbReference type="ChEBI" id="CHEBI:58017"/>
    </ligand>
</feature>
<feature type="binding site" evidence="1">
    <location>
        <position position="197"/>
    </location>
    <ligand>
        <name>uracil</name>
        <dbReference type="ChEBI" id="CHEBI:17568"/>
    </ligand>
</feature>
<feature type="binding site" evidence="1">
    <location>
        <begin position="202"/>
        <end position="204"/>
    </location>
    <ligand>
        <name>uracil</name>
        <dbReference type="ChEBI" id="CHEBI:17568"/>
    </ligand>
</feature>
<feature type="binding site" evidence="1">
    <location>
        <position position="203"/>
    </location>
    <ligand>
        <name>5-phospho-alpha-D-ribose 1-diphosphate</name>
        <dbReference type="ChEBI" id="CHEBI:58017"/>
    </ligand>
</feature>
<accession>B8DVI9</accession>
<name>UPP_BIFA0</name>
<comment type="function">
    <text evidence="1">Catalyzes the conversion of uracil and 5-phospho-alpha-D-ribose 1-diphosphate (PRPP) to UMP and diphosphate.</text>
</comment>
<comment type="catalytic activity">
    <reaction evidence="1">
        <text>UMP + diphosphate = 5-phospho-alpha-D-ribose 1-diphosphate + uracil</text>
        <dbReference type="Rhea" id="RHEA:13017"/>
        <dbReference type="ChEBI" id="CHEBI:17568"/>
        <dbReference type="ChEBI" id="CHEBI:33019"/>
        <dbReference type="ChEBI" id="CHEBI:57865"/>
        <dbReference type="ChEBI" id="CHEBI:58017"/>
        <dbReference type="EC" id="2.4.2.9"/>
    </reaction>
</comment>
<comment type="cofactor">
    <cofactor evidence="1">
        <name>Mg(2+)</name>
        <dbReference type="ChEBI" id="CHEBI:18420"/>
    </cofactor>
    <text evidence="1">Binds 1 Mg(2+) ion per subunit. The magnesium is bound as Mg-PRPP.</text>
</comment>
<comment type="activity regulation">
    <text evidence="1">Allosterically activated by GTP.</text>
</comment>
<comment type="pathway">
    <text evidence="1">Pyrimidine metabolism; UMP biosynthesis via salvage pathway; UMP from uracil: step 1/1.</text>
</comment>
<comment type="similarity">
    <text evidence="1">Belongs to the UPRTase family.</text>
</comment>
<organism>
    <name type="scientific">Bifidobacterium animalis subsp. lactis (strain AD011)</name>
    <dbReference type="NCBI Taxonomy" id="442563"/>
    <lineage>
        <taxon>Bacteria</taxon>
        <taxon>Bacillati</taxon>
        <taxon>Actinomycetota</taxon>
        <taxon>Actinomycetes</taxon>
        <taxon>Bifidobacteriales</taxon>
        <taxon>Bifidobacteriaceae</taxon>
        <taxon>Bifidobacterium</taxon>
    </lineage>
</organism>